<dbReference type="EC" id="6.3.2.1" evidence="1"/>
<dbReference type="EMBL" id="CP001396">
    <property type="protein sequence ID" value="ACR63973.1"/>
    <property type="molecule type" value="Genomic_DNA"/>
</dbReference>
<dbReference type="RefSeq" id="WP_000905383.1">
    <property type="nucleotide sequence ID" value="NC_012759.1"/>
</dbReference>
<dbReference type="SMR" id="C4ZRM6"/>
<dbReference type="GeneID" id="75202052"/>
<dbReference type="KEGG" id="ebw:BWG_0126"/>
<dbReference type="HOGENOM" id="CLU_047148_0_0_6"/>
<dbReference type="UniPathway" id="UPA00028">
    <property type="reaction ID" value="UER00005"/>
</dbReference>
<dbReference type="GO" id="GO:0005829">
    <property type="term" value="C:cytosol"/>
    <property type="evidence" value="ECO:0007669"/>
    <property type="project" value="TreeGrafter"/>
</dbReference>
<dbReference type="GO" id="GO:0005524">
    <property type="term" value="F:ATP binding"/>
    <property type="evidence" value="ECO:0007669"/>
    <property type="project" value="UniProtKB-KW"/>
</dbReference>
<dbReference type="GO" id="GO:0004592">
    <property type="term" value="F:pantoate-beta-alanine ligase activity"/>
    <property type="evidence" value="ECO:0007669"/>
    <property type="project" value="UniProtKB-UniRule"/>
</dbReference>
<dbReference type="GO" id="GO:0015940">
    <property type="term" value="P:pantothenate biosynthetic process"/>
    <property type="evidence" value="ECO:0007669"/>
    <property type="project" value="UniProtKB-UniRule"/>
</dbReference>
<dbReference type="CDD" id="cd00560">
    <property type="entry name" value="PanC"/>
    <property type="match status" value="1"/>
</dbReference>
<dbReference type="FunFam" id="3.30.1300.10:FF:000001">
    <property type="entry name" value="Pantothenate synthetase"/>
    <property type="match status" value="1"/>
</dbReference>
<dbReference type="FunFam" id="3.40.50.620:FF:000013">
    <property type="entry name" value="Pantothenate synthetase"/>
    <property type="match status" value="1"/>
</dbReference>
<dbReference type="Gene3D" id="3.40.50.620">
    <property type="entry name" value="HUPs"/>
    <property type="match status" value="1"/>
</dbReference>
<dbReference type="Gene3D" id="3.30.1300.10">
    <property type="entry name" value="Pantoate-beta-alanine ligase, C-terminal domain"/>
    <property type="match status" value="1"/>
</dbReference>
<dbReference type="HAMAP" id="MF_00158">
    <property type="entry name" value="PanC"/>
    <property type="match status" value="1"/>
</dbReference>
<dbReference type="InterPro" id="IPR004821">
    <property type="entry name" value="Cyt_trans-like"/>
</dbReference>
<dbReference type="InterPro" id="IPR003721">
    <property type="entry name" value="Pantoate_ligase"/>
</dbReference>
<dbReference type="InterPro" id="IPR042176">
    <property type="entry name" value="Pantoate_ligase_C"/>
</dbReference>
<dbReference type="InterPro" id="IPR014729">
    <property type="entry name" value="Rossmann-like_a/b/a_fold"/>
</dbReference>
<dbReference type="NCBIfam" id="TIGR00125">
    <property type="entry name" value="cyt_tran_rel"/>
    <property type="match status" value="1"/>
</dbReference>
<dbReference type="NCBIfam" id="TIGR00018">
    <property type="entry name" value="panC"/>
    <property type="match status" value="1"/>
</dbReference>
<dbReference type="PANTHER" id="PTHR21299">
    <property type="entry name" value="CYTIDYLATE KINASE/PANTOATE-BETA-ALANINE LIGASE"/>
    <property type="match status" value="1"/>
</dbReference>
<dbReference type="PANTHER" id="PTHR21299:SF1">
    <property type="entry name" value="PANTOATE--BETA-ALANINE LIGASE"/>
    <property type="match status" value="1"/>
</dbReference>
<dbReference type="Pfam" id="PF02569">
    <property type="entry name" value="Pantoate_ligase"/>
    <property type="match status" value="1"/>
</dbReference>
<dbReference type="SUPFAM" id="SSF52374">
    <property type="entry name" value="Nucleotidylyl transferase"/>
    <property type="match status" value="1"/>
</dbReference>
<evidence type="ECO:0000255" key="1">
    <source>
        <dbReference type="HAMAP-Rule" id="MF_00158"/>
    </source>
</evidence>
<protein>
    <recommendedName>
        <fullName evidence="1">Pantothenate synthetase</fullName>
        <shortName evidence="1">PS</shortName>
        <ecNumber evidence="1">6.3.2.1</ecNumber>
    </recommendedName>
    <alternativeName>
        <fullName evidence="1">Pantoate--beta-alanine ligase</fullName>
    </alternativeName>
    <alternativeName>
        <fullName evidence="1">Pantoate-activating enzyme</fullName>
    </alternativeName>
</protein>
<reference key="1">
    <citation type="journal article" date="2009" name="J. Bacteriol.">
        <title>Genomic sequencing reveals regulatory mutations and recombinational events in the widely used MC4100 lineage of Escherichia coli K-12.</title>
        <authorList>
            <person name="Ferenci T."/>
            <person name="Zhou Z."/>
            <person name="Betteridge T."/>
            <person name="Ren Y."/>
            <person name="Liu Y."/>
            <person name="Feng L."/>
            <person name="Reeves P.R."/>
            <person name="Wang L."/>
        </authorList>
    </citation>
    <scope>NUCLEOTIDE SEQUENCE [LARGE SCALE GENOMIC DNA]</scope>
    <source>
        <strain>K12 / MC4100 / BW2952</strain>
    </source>
</reference>
<gene>
    <name evidence="1" type="primary">panC</name>
    <name type="ordered locus">BWG_0126</name>
</gene>
<sequence length="283" mass="31598">MLIIETLPLLRQQIRRLRMEGKRVALVPTMGNLHDGHMKLVDEAKARADVVVVSIFVNPMQFDRPEDLARYPRTLQEDCEKLNKRKVDLVFAPSVKEIYPNGTETHTYVDVPGLSTMLEGASRPGHFRGVSTIVSKLFNLVQPDIACFGEKDFQQLALIRKMVADMGFDIEIVGVPIMRAKDGLALSSRNGYLTAEQRKIAPGLYKVLSSIADKLQAGERDLDEIITIAGQELNEKGFRADDIQIRDADTLLEVSETSKRAVILVAAWLGDARLIDNKMVELA</sequence>
<keyword id="KW-0067">ATP-binding</keyword>
<keyword id="KW-0963">Cytoplasm</keyword>
<keyword id="KW-0436">Ligase</keyword>
<keyword id="KW-0547">Nucleotide-binding</keyword>
<keyword id="KW-0566">Pantothenate biosynthesis</keyword>
<comment type="function">
    <text evidence="1">Catalyzes the condensation of pantoate with beta-alanine in an ATP-dependent reaction via a pantoyl-adenylate intermediate.</text>
</comment>
<comment type="catalytic activity">
    <reaction evidence="1">
        <text>(R)-pantoate + beta-alanine + ATP = (R)-pantothenate + AMP + diphosphate + H(+)</text>
        <dbReference type="Rhea" id="RHEA:10912"/>
        <dbReference type="ChEBI" id="CHEBI:15378"/>
        <dbReference type="ChEBI" id="CHEBI:15980"/>
        <dbReference type="ChEBI" id="CHEBI:29032"/>
        <dbReference type="ChEBI" id="CHEBI:30616"/>
        <dbReference type="ChEBI" id="CHEBI:33019"/>
        <dbReference type="ChEBI" id="CHEBI:57966"/>
        <dbReference type="ChEBI" id="CHEBI:456215"/>
        <dbReference type="EC" id="6.3.2.1"/>
    </reaction>
</comment>
<comment type="pathway">
    <text evidence="1">Cofactor biosynthesis; (R)-pantothenate biosynthesis; (R)-pantothenate from (R)-pantoate and beta-alanine: step 1/1.</text>
</comment>
<comment type="subunit">
    <text evidence="1">Homodimer.</text>
</comment>
<comment type="subcellular location">
    <subcellularLocation>
        <location evidence="1">Cytoplasm</location>
    </subcellularLocation>
</comment>
<comment type="miscellaneous">
    <text evidence="1">The reaction proceeds by a bi uni uni bi ping pong mechanism.</text>
</comment>
<comment type="similarity">
    <text evidence="1">Belongs to the pantothenate synthetase family.</text>
</comment>
<feature type="chain" id="PRO_1000203489" description="Pantothenate synthetase">
    <location>
        <begin position="1"/>
        <end position="283"/>
    </location>
</feature>
<feature type="active site" description="Proton donor" evidence="1">
    <location>
        <position position="37"/>
    </location>
</feature>
<feature type="binding site" evidence="1">
    <location>
        <begin position="30"/>
        <end position="37"/>
    </location>
    <ligand>
        <name>ATP</name>
        <dbReference type="ChEBI" id="CHEBI:30616"/>
    </ligand>
</feature>
<feature type="binding site" evidence="1">
    <location>
        <position position="61"/>
    </location>
    <ligand>
        <name>(R)-pantoate</name>
        <dbReference type="ChEBI" id="CHEBI:15980"/>
    </ligand>
</feature>
<feature type="binding site" evidence="1">
    <location>
        <position position="61"/>
    </location>
    <ligand>
        <name>beta-alanine</name>
        <dbReference type="ChEBI" id="CHEBI:57966"/>
    </ligand>
</feature>
<feature type="binding site" evidence="1">
    <location>
        <begin position="149"/>
        <end position="152"/>
    </location>
    <ligand>
        <name>ATP</name>
        <dbReference type="ChEBI" id="CHEBI:30616"/>
    </ligand>
</feature>
<feature type="binding site" evidence="1">
    <location>
        <position position="155"/>
    </location>
    <ligand>
        <name>(R)-pantoate</name>
        <dbReference type="ChEBI" id="CHEBI:15980"/>
    </ligand>
</feature>
<feature type="binding site" evidence="1">
    <location>
        <begin position="186"/>
        <end position="189"/>
    </location>
    <ligand>
        <name>ATP</name>
        <dbReference type="ChEBI" id="CHEBI:30616"/>
    </ligand>
</feature>
<accession>C4ZRM6</accession>
<name>PANC_ECOBW</name>
<organism>
    <name type="scientific">Escherichia coli (strain K12 / MC4100 / BW2952)</name>
    <dbReference type="NCBI Taxonomy" id="595496"/>
    <lineage>
        <taxon>Bacteria</taxon>
        <taxon>Pseudomonadati</taxon>
        <taxon>Pseudomonadota</taxon>
        <taxon>Gammaproteobacteria</taxon>
        <taxon>Enterobacterales</taxon>
        <taxon>Enterobacteriaceae</taxon>
        <taxon>Escherichia</taxon>
    </lineage>
</organism>
<proteinExistence type="inferred from homology"/>